<sequence length="541" mass="59268">MAEASSLERQSPRVASCLVHSLCPREPSLQTTAVVSMGSADHQFNLAELLTQNYNLQEGCAEAPQCPDKPEEELDKDFIDQSSDMPLDELLALYGYESSDPISEQESEGGDTAPALPDMTLDKEQIAKDLLSGEEEEETQSSADDLTPSVTSHEASDLFHNQSGSRFLAGDNGPGSSASSDTEEDALPANKCKKEIMVGPQFQADLNILHLNRHCDKIYENEDQLLWSPSVLPEREVEEFLYRAVKRRWQEMAGPQIPEGEVVKDSEQALYELVKCNFNVEEALRRLRFNVKVIRDGLCAWSEEECRNFEHGFRVHGKNFHLIQANKVRTRSVGECVEYYYLWKKSERYDYFAQQTRLGRRKFVSSGTTDTEQDLDGLDPDGHARLHSEAGVPVEPLNVDIEAGGLDQPGVGSDDLPSSEPGPRPFQQLDEPPAVPSLQQPTSLAASAELPPAAAAAPEPGTSPRLPVDLALPEELPLVSSPVALSEDTAEPMAPAQVALSVTEFGLIGIGDVNPFLTGHPACPTSTLHSEPLSQCNVMTC</sequence>
<accession>Q3U3N0</accession>
<accession>Q5XJI0</accession>
<accession>Q66JU5</accession>
<accession>Q69ZP0</accession>
<accession>Q6NXL7</accession>
<gene>
    <name type="primary">Mier2</name>
    <name type="synonym">Kiaa1193</name>
</gene>
<proteinExistence type="evidence at transcript level"/>
<reference key="1">
    <citation type="journal article" date="2005" name="Science">
        <title>The transcriptional landscape of the mammalian genome.</title>
        <authorList>
            <person name="Carninci P."/>
            <person name="Kasukawa T."/>
            <person name="Katayama S."/>
            <person name="Gough J."/>
            <person name="Frith M.C."/>
            <person name="Maeda N."/>
            <person name="Oyama R."/>
            <person name="Ravasi T."/>
            <person name="Lenhard B."/>
            <person name="Wells C."/>
            <person name="Kodzius R."/>
            <person name="Shimokawa K."/>
            <person name="Bajic V.B."/>
            <person name="Brenner S.E."/>
            <person name="Batalov S."/>
            <person name="Forrest A.R."/>
            <person name="Zavolan M."/>
            <person name="Davis M.J."/>
            <person name="Wilming L.G."/>
            <person name="Aidinis V."/>
            <person name="Allen J.E."/>
            <person name="Ambesi-Impiombato A."/>
            <person name="Apweiler R."/>
            <person name="Aturaliya R.N."/>
            <person name="Bailey T.L."/>
            <person name="Bansal M."/>
            <person name="Baxter L."/>
            <person name="Beisel K.W."/>
            <person name="Bersano T."/>
            <person name="Bono H."/>
            <person name="Chalk A.M."/>
            <person name="Chiu K.P."/>
            <person name="Choudhary V."/>
            <person name="Christoffels A."/>
            <person name="Clutterbuck D.R."/>
            <person name="Crowe M.L."/>
            <person name="Dalla E."/>
            <person name="Dalrymple B.P."/>
            <person name="de Bono B."/>
            <person name="Della Gatta G."/>
            <person name="di Bernardo D."/>
            <person name="Down T."/>
            <person name="Engstrom P."/>
            <person name="Fagiolini M."/>
            <person name="Faulkner G."/>
            <person name="Fletcher C.F."/>
            <person name="Fukushima T."/>
            <person name="Furuno M."/>
            <person name="Futaki S."/>
            <person name="Gariboldi M."/>
            <person name="Georgii-Hemming P."/>
            <person name="Gingeras T.R."/>
            <person name="Gojobori T."/>
            <person name="Green R.E."/>
            <person name="Gustincich S."/>
            <person name="Harbers M."/>
            <person name="Hayashi Y."/>
            <person name="Hensch T.K."/>
            <person name="Hirokawa N."/>
            <person name="Hill D."/>
            <person name="Huminiecki L."/>
            <person name="Iacono M."/>
            <person name="Ikeo K."/>
            <person name="Iwama A."/>
            <person name="Ishikawa T."/>
            <person name="Jakt M."/>
            <person name="Kanapin A."/>
            <person name="Katoh M."/>
            <person name="Kawasawa Y."/>
            <person name="Kelso J."/>
            <person name="Kitamura H."/>
            <person name="Kitano H."/>
            <person name="Kollias G."/>
            <person name="Krishnan S.P."/>
            <person name="Kruger A."/>
            <person name="Kummerfeld S.K."/>
            <person name="Kurochkin I.V."/>
            <person name="Lareau L.F."/>
            <person name="Lazarevic D."/>
            <person name="Lipovich L."/>
            <person name="Liu J."/>
            <person name="Liuni S."/>
            <person name="McWilliam S."/>
            <person name="Madan Babu M."/>
            <person name="Madera M."/>
            <person name="Marchionni L."/>
            <person name="Matsuda H."/>
            <person name="Matsuzawa S."/>
            <person name="Miki H."/>
            <person name="Mignone F."/>
            <person name="Miyake S."/>
            <person name="Morris K."/>
            <person name="Mottagui-Tabar S."/>
            <person name="Mulder N."/>
            <person name="Nakano N."/>
            <person name="Nakauchi H."/>
            <person name="Ng P."/>
            <person name="Nilsson R."/>
            <person name="Nishiguchi S."/>
            <person name="Nishikawa S."/>
            <person name="Nori F."/>
            <person name="Ohara O."/>
            <person name="Okazaki Y."/>
            <person name="Orlando V."/>
            <person name="Pang K.C."/>
            <person name="Pavan W.J."/>
            <person name="Pavesi G."/>
            <person name="Pesole G."/>
            <person name="Petrovsky N."/>
            <person name="Piazza S."/>
            <person name="Reed J."/>
            <person name="Reid J.F."/>
            <person name="Ring B.Z."/>
            <person name="Ringwald M."/>
            <person name="Rost B."/>
            <person name="Ruan Y."/>
            <person name="Salzberg S.L."/>
            <person name="Sandelin A."/>
            <person name="Schneider C."/>
            <person name="Schoenbach C."/>
            <person name="Sekiguchi K."/>
            <person name="Semple C.A."/>
            <person name="Seno S."/>
            <person name="Sessa L."/>
            <person name="Sheng Y."/>
            <person name="Shibata Y."/>
            <person name="Shimada H."/>
            <person name="Shimada K."/>
            <person name="Silva D."/>
            <person name="Sinclair B."/>
            <person name="Sperling S."/>
            <person name="Stupka E."/>
            <person name="Sugiura K."/>
            <person name="Sultana R."/>
            <person name="Takenaka Y."/>
            <person name="Taki K."/>
            <person name="Tammoja K."/>
            <person name="Tan S.L."/>
            <person name="Tang S."/>
            <person name="Taylor M.S."/>
            <person name="Tegner J."/>
            <person name="Teichmann S.A."/>
            <person name="Ueda H.R."/>
            <person name="van Nimwegen E."/>
            <person name="Verardo R."/>
            <person name="Wei C.L."/>
            <person name="Yagi K."/>
            <person name="Yamanishi H."/>
            <person name="Zabarovsky E."/>
            <person name="Zhu S."/>
            <person name="Zimmer A."/>
            <person name="Hide W."/>
            <person name="Bult C."/>
            <person name="Grimmond S.M."/>
            <person name="Teasdale R.D."/>
            <person name="Liu E.T."/>
            <person name="Brusic V."/>
            <person name="Quackenbush J."/>
            <person name="Wahlestedt C."/>
            <person name="Mattick J.S."/>
            <person name="Hume D.A."/>
            <person name="Kai C."/>
            <person name="Sasaki D."/>
            <person name="Tomaru Y."/>
            <person name="Fukuda S."/>
            <person name="Kanamori-Katayama M."/>
            <person name="Suzuki M."/>
            <person name="Aoki J."/>
            <person name="Arakawa T."/>
            <person name="Iida J."/>
            <person name="Imamura K."/>
            <person name="Itoh M."/>
            <person name="Kato T."/>
            <person name="Kawaji H."/>
            <person name="Kawagashira N."/>
            <person name="Kawashima T."/>
            <person name="Kojima M."/>
            <person name="Kondo S."/>
            <person name="Konno H."/>
            <person name="Nakano K."/>
            <person name="Ninomiya N."/>
            <person name="Nishio T."/>
            <person name="Okada M."/>
            <person name="Plessy C."/>
            <person name="Shibata K."/>
            <person name="Shiraki T."/>
            <person name="Suzuki S."/>
            <person name="Tagami M."/>
            <person name="Waki K."/>
            <person name="Watahiki A."/>
            <person name="Okamura-Oho Y."/>
            <person name="Suzuki H."/>
            <person name="Kawai J."/>
            <person name="Hayashizaki Y."/>
        </authorList>
    </citation>
    <scope>NUCLEOTIDE SEQUENCE [LARGE SCALE MRNA] (ISOFORM 1)</scope>
    <source>
        <strain>NOD</strain>
    </source>
</reference>
<reference key="2">
    <citation type="journal article" date="2004" name="DNA Res.">
        <title>Prediction of the coding sequences of mouse homologues of KIAA gene: IV. The complete nucleotide sequences of 500 mouse KIAA-homologous cDNAs identified by screening of terminal sequences of cDNA clones randomly sampled from size-fractionated libraries.</title>
        <authorList>
            <person name="Okazaki N."/>
            <person name="Kikuno R."/>
            <person name="Ohara R."/>
            <person name="Inamoto S."/>
            <person name="Koseki H."/>
            <person name="Hiraoka S."/>
            <person name="Saga Y."/>
            <person name="Seino S."/>
            <person name="Nishimura M."/>
            <person name="Kaisho T."/>
            <person name="Hoshino K."/>
            <person name="Kitamura H."/>
            <person name="Nagase T."/>
            <person name="Ohara O."/>
            <person name="Koga H."/>
        </authorList>
    </citation>
    <scope>NUCLEOTIDE SEQUENCE [LARGE SCALE MRNA] (ISOFORM 3)</scope>
    <source>
        <tissue>Embryonic intestine</tissue>
    </source>
</reference>
<reference key="3">
    <citation type="journal article" date="2004" name="Genome Res.">
        <title>The status, quality, and expansion of the NIH full-length cDNA project: the Mammalian Gene Collection (MGC).</title>
        <authorList>
            <consortium name="The MGC Project Team"/>
        </authorList>
    </citation>
    <scope>NUCLEOTIDE SEQUENCE [LARGE SCALE MRNA] (ISOFORM 2)</scope>
    <source>
        <strain>C57BL/6J</strain>
        <strain>FVB/N</strain>
        <tissue>Brain</tissue>
        <tissue>Mammary tumor</tissue>
    </source>
</reference>
<evidence type="ECO:0000250" key="1"/>
<evidence type="ECO:0000250" key="2">
    <source>
        <dbReference type="UniProtKB" id="Q8N344"/>
    </source>
</evidence>
<evidence type="ECO:0000255" key="3">
    <source>
        <dbReference type="PROSITE-ProRule" id="PRU00512"/>
    </source>
</evidence>
<evidence type="ECO:0000255" key="4">
    <source>
        <dbReference type="PROSITE-ProRule" id="PRU00624"/>
    </source>
</evidence>
<evidence type="ECO:0000256" key="5">
    <source>
        <dbReference type="SAM" id="MobiDB-lite"/>
    </source>
</evidence>
<evidence type="ECO:0000303" key="6">
    <source>
    </source>
</evidence>
<evidence type="ECO:0000303" key="7">
    <source>
    </source>
</evidence>
<evidence type="ECO:0000305" key="8"/>
<feature type="chain" id="PRO_0000313679" description="Mesoderm induction early response protein 2">
    <location>
        <begin position="1"/>
        <end position="541"/>
    </location>
</feature>
<feature type="domain" description="ELM2" evidence="3">
    <location>
        <begin position="194"/>
        <end position="291"/>
    </location>
</feature>
<feature type="domain" description="SANT" evidence="4">
    <location>
        <begin position="296"/>
        <end position="348"/>
    </location>
</feature>
<feature type="region of interest" description="Disordered" evidence="5">
    <location>
        <begin position="100"/>
        <end position="119"/>
    </location>
</feature>
<feature type="region of interest" description="Disordered" evidence="5">
    <location>
        <begin position="131"/>
        <end position="186"/>
    </location>
</feature>
<feature type="region of interest" description="Disordered" evidence="5">
    <location>
        <begin position="364"/>
        <end position="440"/>
    </location>
</feature>
<feature type="compositionally biased region" description="Polar residues" evidence="5">
    <location>
        <begin position="140"/>
        <end position="165"/>
    </location>
</feature>
<feature type="modified residue" description="Phosphoserine" evidence="2">
    <location>
        <position position="11"/>
    </location>
</feature>
<feature type="splice variant" id="VSP_030096" description="In isoform 3." evidence="6">
    <location>
        <begin position="1"/>
        <end position="36"/>
    </location>
</feature>
<feature type="splice variant" id="VSP_030097" description="In isoform 2 and isoform 3." evidence="6 7">
    <location>
        <begin position="124"/>
        <end position="125"/>
    </location>
</feature>
<feature type="splice variant" id="VSP_030098" description="In isoform 3." evidence="6">
    <location>
        <begin position="390"/>
        <end position="397"/>
    </location>
</feature>
<organism>
    <name type="scientific">Mus musculus</name>
    <name type="common">Mouse</name>
    <dbReference type="NCBI Taxonomy" id="10090"/>
    <lineage>
        <taxon>Eukaryota</taxon>
        <taxon>Metazoa</taxon>
        <taxon>Chordata</taxon>
        <taxon>Craniata</taxon>
        <taxon>Vertebrata</taxon>
        <taxon>Euteleostomi</taxon>
        <taxon>Mammalia</taxon>
        <taxon>Eutheria</taxon>
        <taxon>Euarchontoglires</taxon>
        <taxon>Glires</taxon>
        <taxon>Rodentia</taxon>
        <taxon>Myomorpha</taxon>
        <taxon>Muroidea</taxon>
        <taxon>Muridae</taxon>
        <taxon>Murinae</taxon>
        <taxon>Mus</taxon>
        <taxon>Mus</taxon>
    </lineage>
</organism>
<protein>
    <recommendedName>
        <fullName>Mesoderm induction early response protein 2</fullName>
        <shortName>Mi-er2</shortName>
    </recommendedName>
</protein>
<name>MIER2_MOUSE</name>
<dbReference type="EMBL" id="AK154672">
    <property type="protein sequence ID" value="BAE32755.1"/>
    <property type="molecule type" value="mRNA"/>
</dbReference>
<dbReference type="EMBL" id="AK173128">
    <property type="protein sequence ID" value="BAD32406.1"/>
    <property type="status" value="ALT_INIT"/>
    <property type="molecule type" value="mRNA"/>
</dbReference>
<dbReference type="EMBL" id="BC067013">
    <property type="protein sequence ID" value="AAH67013.2"/>
    <property type="molecule type" value="mRNA"/>
</dbReference>
<dbReference type="EMBL" id="BC080757">
    <property type="protein sequence ID" value="AAH80757.1"/>
    <property type="molecule type" value="mRNA"/>
</dbReference>
<dbReference type="EMBL" id="BC083321">
    <property type="protein sequence ID" value="AAH83321.1"/>
    <property type="molecule type" value="mRNA"/>
</dbReference>
<dbReference type="CCDS" id="CCDS48619.1">
    <molecule id="Q3U3N0-2"/>
</dbReference>
<dbReference type="CCDS" id="CCDS83723.1">
    <molecule id="Q3U3N0-1"/>
</dbReference>
<dbReference type="RefSeq" id="NP_001303628.1">
    <molecule id="Q3U3N0-1"/>
    <property type="nucleotide sequence ID" value="NM_001316699.2"/>
</dbReference>
<dbReference type="RefSeq" id="NP_081698.2">
    <molecule id="Q3U3N0-2"/>
    <property type="nucleotide sequence ID" value="NM_027422.4"/>
</dbReference>
<dbReference type="BioGRID" id="214043">
    <property type="interactions" value="2"/>
</dbReference>
<dbReference type="FunCoup" id="Q3U3N0">
    <property type="interactions" value="2953"/>
</dbReference>
<dbReference type="STRING" id="10090.ENSMUSP00000127387"/>
<dbReference type="iPTMnet" id="Q3U3N0"/>
<dbReference type="PhosphoSitePlus" id="Q3U3N0"/>
<dbReference type="PaxDb" id="10090-ENSMUSP00000059864"/>
<dbReference type="PeptideAtlas" id="Q3U3N0"/>
<dbReference type="ProteomicsDB" id="295565">
    <molecule id="Q3U3N0-1"/>
</dbReference>
<dbReference type="ProteomicsDB" id="295566">
    <molecule id="Q3U3N0-2"/>
</dbReference>
<dbReference type="ProteomicsDB" id="295567">
    <molecule id="Q3U3N0-3"/>
</dbReference>
<dbReference type="Antibodypedia" id="42088">
    <property type="antibodies" value="242 antibodies from 23 providers"/>
</dbReference>
<dbReference type="DNASU" id="70427"/>
<dbReference type="Ensembl" id="ENSMUST00000062855.15">
    <molecule id="Q3U3N0-2"/>
    <property type="protein sequence ID" value="ENSMUSP00000059864.9"/>
    <property type="gene ID" value="ENSMUSG00000042570.16"/>
</dbReference>
<dbReference type="Ensembl" id="ENSMUST00000165028.8">
    <molecule id="Q3U3N0-1"/>
    <property type="protein sequence ID" value="ENSMUSP00000127387.2"/>
    <property type="gene ID" value="ENSMUSG00000042570.16"/>
</dbReference>
<dbReference type="GeneID" id="70427"/>
<dbReference type="KEGG" id="mmu:70427"/>
<dbReference type="UCSC" id="uc007fyw.1">
    <molecule id="Q3U3N0-2"/>
    <property type="organism name" value="mouse"/>
</dbReference>
<dbReference type="UCSC" id="uc007fyy.1">
    <molecule id="Q3U3N0-1"/>
    <property type="organism name" value="mouse"/>
</dbReference>
<dbReference type="AGR" id="MGI:1917677"/>
<dbReference type="CTD" id="54531"/>
<dbReference type="MGI" id="MGI:1917677">
    <property type="gene designation" value="Mier2"/>
</dbReference>
<dbReference type="VEuPathDB" id="HostDB:ENSMUSG00000042570"/>
<dbReference type="eggNOG" id="KOG4329">
    <property type="taxonomic scope" value="Eukaryota"/>
</dbReference>
<dbReference type="GeneTree" id="ENSGT01030000234573"/>
<dbReference type="HOGENOM" id="CLU_027202_3_1_1"/>
<dbReference type="InParanoid" id="Q3U3N0"/>
<dbReference type="OMA" id="NLCPREP"/>
<dbReference type="OrthoDB" id="5916873at2759"/>
<dbReference type="PhylomeDB" id="Q3U3N0"/>
<dbReference type="TreeFam" id="TF106453"/>
<dbReference type="BioGRID-ORCS" id="70427">
    <property type="hits" value="4 hits in 78 CRISPR screens"/>
</dbReference>
<dbReference type="PRO" id="PR:Q3U3N0"/>
<dbReference type="Proteomes" id="UP000000589">
    <property type="component" value="Chromosome 10"/>
</dbReference>
<dbReference type="RNAct" id="Q3U3N0">
    <property type="molecule type" value="protein"/>
</dbReference>
<dbReference type="Bgee" id="ENSMUSG00000042570">
    <property type="expression patterns" value="Expressed in animal zygote and 142 other cell types or tissues"/>
</dbReference>
<dbReference type="ExpressionAtlas" id="Q3U3N0">
    <property type="expression patterns" value="baseline and differential"/>
</dbReference>
<dbReference type="GO" id="GO:0005737">
    <property type="term" value="C:cytoplasm"/>
    <property type="evidence" value="ECO:0007669"/>
    <property type="project" value="Ensembl"/>
</dbReference>
<dbReference type="GO" id="GO:0005634">
    <property type="term" value="C:nucleus"/>
    <property type="evidence" value="ECO:0007669"/>
    <property type="project" value="UniProtKB-SubCell"/>
</dbReference>
<dbReference type="GO" id="GO:0032991">
    <property type="term" value="C:protein-containing complex"/>
    <property type="evidence" value="ECO:0007669"/>
    <property type="project" value="Ensembl"/>
</dbReference>
<dbReference type="GO" id="GO:0003677">
    <property type="term" value="F:DNA binding"/>
    <property type="evidence" value="ECO:0007669"/>
    <property type="project" value="UniProtKB-KW"/>
</dbReference>
<dbReference type="GO" id="GO:0004407">
    <property type="term" value="F:histone deacetylase activity"/>
    <property type="evidence" value="ECO:0007669"/>
    <property type="project" value="Ensembl"/>
</dbReference>
<dbReference type="GO" id="GO:0042826">
    <property type="term" value="F:histone deacetylase binding"/>
    <property type="evidence" value="ECO:0007669"/>
    <property type="project" value="Ensembl"/>
</dbReference>
<dbReference type="CDD" id="cd11661">
    <property type="entry name" value="SANT_MTA3_like"/>
    <property type="match status" value="1"/>
</dbReference>
<dbReference type="FunFam" id="1.10.10.60:FF:000025">
    <property type="entry name" value="Mesoderm induction early response 1, transcriptional regulator"/>
    <property type="match status" value="1"/>
</dbReference>
<dbReference type="FunFam" id="4.10.1240.50:FF:000005">
    <property type="entry name" value="Mesoderm induction early response protein 3"/>
    <property type="match status" value="1"/>
</dbReference>
<dbReference type="Gene3D" id="1.10.10.60">
    <property type="entry name" value="Homeodomain-like"/>
    <property type="match status" value="1"/>
</dbReference>
<dbReference type="InterPro" id="IPR000949">
    <property type="entry name" value="ELM2_dom"/>
</dbReference>
<dbReference type="InterPro" id="IPR009057">
    <property type="entry name" value="Homeodomain-like_sf"/>
</dbReference>
<dbReference type="InterPro" id="IPR040138">
    <property type="entry name" value="MIER/MTA"/>
</dbReference>
<dbReference type="InterPro" id="IPR001005">
    <property type="entry name" value="SANT/Myb"/>
</dbReference>
<dbReference type="InterPro" id="IPR017884">
    <property type="entry name" value="SANT_dom"/>
</dbReference>
<dbReference type="PANTHER" id="PTHR10865:SF27">
    <property type="entry name" value="MESODERM INDUCTION EARLY RESPONSE PROTEIN 2"/>
    <property type="match status" value="1"/>
</dbReference>
<dbReference type="PANTHER" id="PTHR10865">
    <property type="entry name" value="METASTASIS-ASSOCIATED PROTEIN AND MESODERM INDUCTION EARLY RESPONSE PROTEIN"/>
    <property type="match status" value="1"/>
</dbReference>
<dbReference type="Pfam" id="PF01448">
    <property type="entry name" value="ELM2"/>
    <property type="match status" value="1"/>
</dbReference>
<dbReference type="Pfam" id="PF00249">
    <property type="entry name" value="Myb_DNA-binding"/>
    <property type="match status" value="1"/>
</dbReference>
<dbReference type="SMART" id="SM01189">
    <property type="entry name" value="ELM2"/>
    <property type="match status" value="1"/>
</dbReference>
<dbReference type="SMART" id="SM00717">
    <property type="entry name" value="SANT"/>
    <property type="match status" value="1"/>
</dbReference>
<dbReference type="SUPFAM" id="SSF46689">
    <property type="entry name" value="Homeodomain-like"/>
    <property type="match status" value="1"/>
</dbReference>
<dbReference type="PROSITE" id="PS51156">
    <property type="entry name" value="ELM2"/>
    <property type="match status" value="1"/>
</dbReference>
<dbReference type="PROSITE" id="PS51293">
    <property type="entry name" value="SANT"/>
    <property type="match status" value="1"/>
</dbReference>
<comment type="function">
    <text evidence="1">Transcriptional repressor.</text>
</comment>
<comment type="subunit">
    <text evidence="1">Part of a complex containing at least CDYL, MIER1, MIER2, HDAC1 and HDAC2.</text>
</comment>
<comment type="subcellular location">
    <subcellularLocation>
        <location evidence="3 4">Nucleus</location>
    </subcellularLocation>
</comment>
<comment type="alternative products">
    <event type="alternative splicing"/>
    <isoform>
        <id>Q3U3N0-1</id>
        <name>1</name>
        <sequence type="displayed"/>
    </isoform>
    <isoform>
        <id>Q3U3N0-2</id>
        <name>2</name>
        <sequence type="described" ref="VSP_030097"/>
    </isoform>
    <isoform>
        <id>Q3U3N0-3</id>
        <name>3</name>
        <sequence type="described" ref="VSP_030096 VSP_030097 VSP_030098"/>
    </isoform>
</comment>
<comment type="sequence caution" evidence="8">
    <conflict type="erroneous initiation">
        <sequence resource="EMBL-CDS" id="BAD32406"/>
    </conflict>
</comment>
<keyword id="KW-0025">Alternative splicing</keyword>
<keyword id="KW-0238">DNA-binding</keyword>
<keyword id="KW-0539">Nucleus</keyword>
<keyword id="KW-0597">Phosphoprotein</keyword>
<keyword id="KW-1185">Reference proteome</keyword>
<keyword id="KW-0678">Repressor</keyword>
<keyword id="KW-0804">Transcription</keyword>
<keyword id="KW-0805">Transcription regulation</keyword>